<accession>P9WQE4</accession>
<accession>L0TB25</accession>
<accession>O53234</accession>
<accession>Q10978</accession>
<evidence type="ECO:0000250" key="1"/>
<evidence type="ECO:0000250" key="2">
    <source>
        <dbReference type="UniProtKB" id="P9WQE5"/>
    </source>
</evidence>
<evidence type="ECO:0000255" key="3">
    <source>
        <dbReference type="PROSITE-ProRule" id="PRU00258"/>
    </source>
</evidence>
<evidence type="ECO:0000255" key="4">
    <source>
        <dbReference type="PROSITE-ProRule" id="PRU01348"/>
    </source>
</evidence>
<evidence type="ECO:0000255" key="5">
    <source>
        <dbReference type="PROSITE-ProRule" id="PRU10022"/>
    </source>
</evidence>
<evidence type="ECO:0000305" key="6"/>
<gene>
    <name type="primary">ppsB</name>
    <name type="ordered locus">MT3002</name>
</gene>
<sequence>MMRTAFSRISGMTAQQRTSLADEFDRVSRIAVAEPVAVVGIGCRFPGDVDGPESFWDFLVAGRNAISTVPADRWDAEAFYHPDPLTPGRMTTKWGGFVPDVAGFDAEFFGITPREAAAMDPQQRMLLEVAWEALEHAGIPPDSLGGTRTAVMMGVYFNEYQSMLAASPQNVDAYSGTGNAHSITVGRISYLLGLRGPAVAVDTACSSSLVAVHLACQSLRLRETDLALAGGVSITLRPETQIAISAWGLLSPQGRCAAFDAAADGFVRGEGAGVVVLKRLTDAVRDGDQVLAVVRGSAVNQDGRSNGVTAPNTAAQCDVIADALRSGDVAPDSVNYVEAHGTGTVLGDPIEFEALAATYGHGGDACALGAVKTNIGHLEAAAGIAGFIKATLAVQRATIPPNLHFSQWNPAIDAASTRFFVPTQNSPWPTAEGPRRAAVSSFGLGGTNAHVIIEQGSELAPVSEGGEDTGVSTLVVTGKTAQRMAATAQVLADWMEGPGAEVAVADVAHTVNHHRARQATFGTVVARDRAQAIAGLRALAAGQHAPGVVSHQDGSPGPGTVFVYSGRGSQWAGMGRQLLADEPAFAAAVAELEPVFVEQAGFSLRDVIATGKELVGIEQIQLGLIGMQLTLTELWRSYGVQPDLVIGHSMGEVAAAVVAGALTPAEGLRVTATRARLMAPLSGQGGMALLGLDAAATEALIADYPQVTVGIYNSPRQTVIAGPTEQIDELIARVRAQNRFASRVNIEVAPHNPAMDALQPAMRSELADLTPRTPTIGIISTTYADLHTQPIFDAEHWATNMRNPVRFQQAIASAGSGADGAYHTFIEISAHPLLTQAIADTLEDAHRPTKSAAKYLSIGTLQRDADDTVTFRTNLYTADIAHPPHTCHPPEPHPTIPTTPWQHTHHWIATTHPSTAAPEDPGSNKVVVNGQSTSESRALEDWCHQLAWPIRPAVSADPPSTAAWLVVADNELCHELARAADSRVDSLSPPALAAGSDPAALLDALRGVDNVLYAPPVPGELLDIESAYQVFHATRRLAAAMVASSATAISPPKLFIMTRNAQPISEGDRANPGHAVLWGLGRSLALEHPEIWGGIIDLDDSMPAELAVRHVLTAAHGTDGEDQVVYRSGARHVPRLQRRTLPGKPVTLNADASQLVIGATGNIGPHLIRQLARMGAKTIVAMARKPGALDELTQCLAATGTDLIAVAADATDPAAMQTLFDRFGTELPPLEGIYLAAFAGRPALLSEMTDDDVTTMFRPKLDALALLHRRSLKSPVRHFVLFSSVSGLLGSRWLAHYTATSAFLDSFAGARRTMGLPATVVDWGLWKSLADVQKDATQISAESGLQPMADEVAIGALPLVMNPDAAVATVVVAADWPLLAAAYRTRGALRIVDDLLPAPEDVGKGESEFRTSLRSCPAEKRRDMLFDHVGALAATVMGMPPTEPLDPSAGFFQLGMDSLMSVTLQRALSESLGEFLPASVVFDYPTVYSLTDYLATVLPELLEIGATAVATQQATDSYHELTEAELLEQLSERLRGTQ</sequence>
<feature type="chain" id="PRO_0000426790" description="Phenolphthiocerol/phthiocerol polyketide synthase subunit B">
    <location>
        <begin position="1"/>
        <end position="1538"/>
    </location>
</feature>
<feature type="domain" description="Ketosynthase family 3 (KS3)" evidence="4">
    <location>
        <begin position="33"/>
        <end position="455"/>
    </location>
</feature>
<feature type="domain" description="Carrier" evidence="3">
    <location>
        <begin position="1423"/>
        <end position="1498"/>
    </location>
</feature>
<feature type="region of interest" description="Acyltransferase" evidence="1">
    <location>
        <begin position="553"/>
        <end position="882"/>
    </location>
</feature>
<feature type="region of interest" description="Beta-ketoacyl reductase" evidence="1">
    <location>
        <begin position="1153"/>
        <end position="1328"/>
    </location>
</feature>
<feature type="active site" description="For beta-ketoacyl synthase activity" evidence="4">
    <location>
        <position position="205"/>
    </location>
</feature>
<feature type="active site" description="For beta-ketoacyl synthase activity" evidence="4">
    <location>
        <position position="340"/>
    </location>
</feature>
<feature type="active site" description="For beta-ketoacyl synthase activity" evidence="4">
    <location>
        <position position="377"/>
    </location>
</feature>
<feature type="active site" description="For malonyltransferase activity" evidence="5">
    <location>
        <position position="649"/>
    </location>
</feature>
<feature type="binding site" evidence="1">
    <location>
        <begin position="1153"/>
        <end position="1196"/>
    </location>
    <ligand>
        <name>NADP(+)</name>
        <dbReference type="ChEBI" id="CHEBI:58349"/>
    </ligand>
</feature>
<feature type="modified residue" description="O-(pantetheine 4'-phosphoryl)serine" evidence="3">
    <location>
        <position position="1458"/>
    </location>
</feature>
<protein>
    <recommendedName>
        <fullName evidence="6">Phenolphthiocerol/phthiocerol polyketide synthase subunit B</fullName>
        <ecNumber evidence="2">2.3.1.292</ecNumber>
    </recommendedName>
    <alternativeName>
        <fullName>(Phenol)carboxyphthiodiolenone synthase subunit B</fullName>
    </alternativeName>
    <alternativeName>
        <fullName>Beta-ketoacyl-acyl-carrier-protein synthase I</fullName>
    </alternativeName>
    <alternativeName>
        <fullName>Phthiocerol synthesis polyketide synthase type I PpsB</fullName>
    </alternativeName>
</protein>
<keyword id="KW-0276">Fatty acid metabolism</keyword>
<keyword id="KW-0443">Lipid metabolism</keyword>
<keyword id="KW-0511">Multifunctional enzyme</keyword>
<keyword id="KW-0521">NADP</keyword>
<keyword id="KW-0560">Oxidoreductase</keyword>
<keyword id="KW-0596">Phosphopantetheine</keyword>
<keyword id="KW-0597">Phosphoprotein</keyword>
<keyword id="KW-1185">Reference proteome</keyword>
<keyword id="KW-0808">Transferase</keyword>
<dbReference type="EC" id="2.3.1.292" evidence="2"/>
<dbReference type="EMBL" id="AE000516">
    <property type="protein sequence ID" value="AAK47329.1"/>
    <property type="molecule type" value="Genomic_DNA"/>
</dbReference>
<dbReference type="PIR" id="E70874">
    <property type="entry name" value="E70874"/>
</dbReference>
<dbReference type="RefSeq" id="WP_003899547.1">
    <property type="nucleotide sequence ID" value="NZ_KK341227.1"/>
</dbReference>
<dbReference type="SMR" id="P9WQE4"/>
<dbReference type="KEGG" id="mtc:MT3002"/>
<dbReference type="PATRIC" id="fig|83331.31.peg.3242"/>
<dbReference type="HOGENOM" id="CLU_000022_35_0_11"/>
<dbReference type="UniPathway" id="UPA00094"/>
<dbReference type="Proteomes" id="UP000001020">
    <property type="component" value="Chromosome"/>
</dbReference>
<dbReference type="GO" id="GO:0034081">
    <property type="term" value="C:polyketide synthase complex"/>
    <property type="evidence" value="ECO:0000250"/>
    <property type="project" value="UniProtKB"/>
</dbReference>
<dbReference type="GO" id="GO:0004315">
    <property type="term" value="F:3-oxoacyl-[acyl-carrier-protein] synthase activity"/>
    <property type="evidence" value="ECO:0007669"/>
    <property type="project" value="InterPro"/>
</dbReference>
<dbReference type="GO" id="GO:0004312">
    <property type="term" value="F:fatty acid synthase activity"/>
    <property type="evidence" value="ECO:0007669"/>
    <property type="project" value="TreeGrafter"/>
</dbReference>
<dbReference type="GO" id="GO:0016491">
    <property type="term" value="F:oxidoreductase activity"/>
    <property type="evidence" value="ECO:0007669"/>
    <property type="project" value="UniProtKB-KW"/>
</dbReference>
<dbReference type="GO" id="GO:0031177">
    <property type="term" value="F:phosphopantetheine binding"/>
    <property type="evidence" value="ECO:0007669"/>
    <property type="project" value="InterPro"/>
</dbReference>
<dbReference type="GO" id="GO:0071766">
    <property type="term" value="P:Actinobacterium-type cell wall biogenesis"/>
    <property type="evidence" value="ECO:0000250"/>
    <property type="project" value="UniProtKB"/>
</dbReference>
<dbReference type="GO" id="GO:0006633">
    <property type="term" value="P:fatty acid biosynthetic process"/>
    <property type="evidence" value="ECO:0007669"/>
    <property type="project" value="UniProtKB-UniPathway"/>
</dbReference>
<dbReference type="GO" id="GO:0097041">
    <property type="term" value="P:phenolic phthiocerol biosynthetic process"/>
    <property type="evidence" value="ECO:0000250"/>
    <property type="project" value="UniProtKB"/>
</dbReference>
<dbReference type="GO" id="GO:0097040">
    <property type="term" value="P:phthiocerol biosynthetic process"/>
    <property type="evidence" value="ECO:0000250"/>
    <property type="project" value="UniProtKB"/>
</dbReference>
<dbReference type="CDD" id="cd05274">
    <property type="entry name" value="KR_FAS_SDR_x"/>
    <property type="match status" value="1"/>
</dbReference>
<dbReference type="CDD" id="cd00833">
    <property type="entry name" value="PKS"/>
    <property type="match status" value="1"/>
</dbReference>
<dbReference type="FunFam" id="3.30.70.250:FF:000003">
    <property type="entry name" value="Polyketide beta-ketoacyl synthase Pks3"/>
    <property type="match status" value="1"/>
</dbReference>
<dbReference type="FunFam" id="3.40.47.10:FF:000019">
    <property type="entry name" value="Polyketide synthase type I"/>
    <property type="match status" value="1"/>
</dbReference>
<dbReference type="FunFam" id="1.10.1200.10:FF:000007">
    <property type="entry name" value="Probable polyketide synthase pks17"/>
    <property type="match status" value="1"/>
</dbReference>
<dbReference type="Gene3D" id="3.40.47.10">
    <property type="match status" value="1"/>
</dbReference>
<dbReference type="Gene3D" id="1.10.1200.10">
    <property type="entry name" value="ACP-like"/>
    <property type="match status" value="1"/>
</dbReference>
<dbReference type="Gene3D" id="3.30.70.250">
    <property type="entry name" value="Malonyl-CoA ACP transacylase, ACP-binding"/>
    <property type="match status" value="1"/>
</dbReference>
<dbReference type="Gene3D" id="3.40.366.10">
    <property type="entry name" value="Malonyl-Coenzyme A Acyl Carrier Protein, domain 2"/>
    <property type="match status" value="1"/>
</dbReference>
<dbReference type="Gene3D" id="3.40.50.720">
    <property type="entry name" value="NAD(P)-binding Rossmann-like Domain"/>
    <property type="match status" value="1"/>
</dbReference>
<dbReference type="InterPro" id="IPR001227">
    <property type="entry name" value="Ac_transferase_dom_sf"/>
</dbReference>
<dbReference type="InterPro" id="IPR036736">
    <property type="entry name" value="ACP-like_sf"/>
</dbReference>
<dbReference type="InterPro" id="IPR014043">
    <property type="entry name" value="Acyl_transferase_dom"/>
</dbReference>
<dbReference type="InterPro" id="IPR016035">
    <property type="entry name" value="Acyl_Trfase/lysoPLipase"/>
</dbReference>
<dbReference type="InterPro" id="IPR018201">
    <property type="entry name" value="Ketoacyl_synth_AS"/>
</dbReference>
<dbReference type="InterPro" id="IPR014031">
    <property type="entry name" value="Ketoacyl_synth_C"/>
</dbReference>
<dbReference type="InterPro" id="IPR014030">
    <property type="entry name" value="Ketoacyl_synth_N"/>
</dbReference>
<dbReference type="InterPro" id="IPR016036">
    <property type="entry name" value="Malonyl_transacylase_ACP-bd"/>
</dbReference>
<dbReference type="InterPro" id="IPR036291">
    <property type="entry name" value="NAD(P)-bd_dom_sf"/>
</dbReference>
<dbReference type="InterPro" id="IPR032821">
    <property type="entry name" value="PKS_assoc"/>
</dbReference>
<dbReference type="InterPro" id="IPR020841">
    <property type="entry name" value="PKS_Beta-ketoAc_synthase_dom"/>
</dbReference>
<dbReference type="InterPro" id="IPR013968">
    <property type="entry name" value="PKS_KR"/>
</dbReference>
<dbReference type="InterPro" id="IPR050091">
    <property type="entry name" value="PKS_NRPS_Biosynth_Enz"/>
</dbReference>
<dbReference type="InterPro" id="IPR020806">
    <property type="entry name" value="PKS_PP-bd"/>
</dbReference>
<dbReference type="InterPro" id="IPR009081">
    <property type="entry name" value="PP-bd_ACP"/>
</dbReference>
<dbReference type="InterPro" id="IPR016039">
    <property type="entry name" value="Thiolase-like"/>
</dbReference>
<dbReference type="PANTHER" id="PTHR43775">
    <property type="entry name" value="FATTY ACID SYNTHASE"/>
    <property type="match status" value="1"/>
</dbReference>
<dbReference type="PANTHER" id="PTHR43775:SF37">
    <property type="entry name" value="SI:DKEY-61P9.11"/>
    <property type="match status" value="1"/>
</dbReference>
<dbReference type="Pfam" id="PF00698">
    <property type="entry name" value="Acyl_transf_1"/>
    <property type="match status" value="1"/>
</dbReference>
<dbReference type="Pfam" id="PF16197">
    <property type="entry name" value="KAsynt_C_assoc"/>
    <property type="match status" value="1"/>
</dbReference>
<dbReference type="Pfam" id="PF00109">
    <property type="entry name" value="ketoacyl-synt"/>
    <property type="match status" value="1"/>
</dbReference>
<dbReference type="Pfam" id="PF02801">
    <property type="entry name" value="Ketoacyl-synt_C"/>
    <property type="match status" value="1"/>
</dbReference>
<dbReference type="Pfam" id="PF08659">
    <property type="entry name" value="KR"/>
    <property type="match status" value="1"/>
</dbReference>
<dbReference type="Pfam" id="PF00550">
    <property type="entry name" value="PP-binding"/>
    <property type="match status" value="1"/>
</dbReference>
<dbReference type="SMART" id="SM00827">
    <property type="entry name" value="PKS_AT"/>
    <property type="match status" value="1"/>
</dbReference>
<dbReference type="SMART" id="SM00822">
    <property type="entry name" value="PKS_KR"/>
    <property type="match status" value="1"/>
</dbReference>
<dbReference type="SMART" id="SM00825">
    <property type="entry name" value="PKS_KS"/>
    <property type="match status" value="1"/>
</dbReference>
<dbReference type="SMART" id="SM00823">
    <property type="entry name" value="PKS_PP"/>
    <property type="match status" value="1"/>
</dbReference>
<dbReference type="SMART" id="SM01294">
    <property type="entry name" value="PKS_PP_betabranch"/>
    <property type="match status" value="1"/>
</dbReference>
<dbReference type="SUPFAM" id="SSF47336">
    <property type="entry name" value="ACP-like"/>
    <property type="match status" value="1"/>
</dbReference>
<dbReference type="SUPFAM" id="SSF52151">
    <property type="entry name" value="FabD/lysophospholipase-like"/>
    <property type="match status" value="1"/>
</dbReference>
<dbReference type="SUPFAM" id="SSF51735">
    <property type="entry name" value="NAD(P)-binding Rossmann-fold domains"/>
    <property type="match status" value="2"/>
</dbReference>
<dbReference type="SUPFAM" id="SSF55048">
    <property type="entry name" value="Probable ACP-binding domain of malonyl-CoA ACP transacylase"/>
    <property type="match status" value="1"/>
</dbReference>
<dbReference type="SUPFAM" id="SSF53901">
    <property type="entry name" value="Thiolase-like"/>
    <property type="match status" value="1"/>
</dbReference>
<dbReference type="PROSITE" id="PS50075">
    <property type="entry name" value="CARRIER"/>
    <property type="match status" value="1"/>
</dbReference>
<dbReference type="PROSITE" id="PS00606">
    <property type="entry name" value="KS3_1"/>
    <property type="match status" value="1"/>
</dbReference>
<dbReference type="PROSITE" id="PS52004">
    <property type="entry name" value="KS3_2"/>
    <property type="match status" value="1"/>
</dbReference>
<comment type="function">
    <text evidence="2">Part of the PpsABCDE complex involved in the biosynthesis of the lipid core common to phthiocerols and phenolphthiocerols by successive additions of malonyl-CoA or methylmalonyl-CoA extender units. PpsA can accept as substrate the activated forms of either icosanoyl (C20), docosanoyl (C22) or lignoceroyl (C24) groups from FadD26, or a (4-hydroxyphenyl)-C17 or (4-hydroxyphenyl)-C19 fatty acyl from FadD29. PpsA initiates the biosynthesis and extends its substrate using a malonyl-CoA extender unit. The PpsB and PpsC proteins add the second and third malonyl-CoA extender units. PpsD adds an (R)-methylmalonyl unit and PpsE adds a second (R)-methylmalonyl unit. The incorporation of the methylmalonyl units results in formation of two branched methyl groups in the elongated product.</text>
</comment>
<comment type="catalytic activity">
    <reaction evidence="2">
        <text>icosanoyl-[(phenol)carboxyphthiodiolenone synthase] + 2 (S)-methylmalonyl-CoA + 3 malonyl-CoA + 5 NADPH + 10 H(+) = C32-carboxyphthiodiolenone-[(phenol)carboxyphthiodiolenone synthase] + 5 CO2 + 5 NADP(+) + 5 CoA + 2 H2O</text>
        <dbReference type="Rhea" id="RHEA:57748"/>
        <dbReference type="Rhea" id="RHEA-COMP:14985"/>
        <dbReference type="Rhea" id="RHEA-COMP:14986"/>
        <dbReference type="ChEBI" id="CHEBI:15377"/>
        <dbReference type="ChEBI" id="CHEBI:15378"/>
        <dbReference type="ChEBI" id="CHEBI:16526"/>
        <dbReference type="ChEBI" id="CHEBI:57287"/>
        <dbReference type="ChEBI" id="CHEBI:57327"/>
        <dbReference type="ChEBI" id="CHEBI:57384"/>
        <dbReference type="ChEBI" id="CHEBI:57783"/>
        <dbReference type="ChEBI" id="CHEBI:58349"/>
        <dbReference type="ChEBI" id="CHEBI:87848"/>
        <dbReference type="ChEBI" id="CHEBI:142236"/>
        <dbReference type="EC" id="2.3.1.292"/>
    </reaction>
</comment>
<comment type="catalytic activity">
    <reaction evidence="2">
        <text>docosanoyl-[(phenol)carboxyphthiodiolenone synthase] + 2 (S)-methylmalonyl-CoA + 3 malonyl-CoA + 5 NADPH + 10 H(+) = C34-carboxyphthiodiolenone-[(phenol)carboxyphthiodiolenone synthase] + 5 CO2 + 5 NADP(+) + 5 CoA + 2 H2O</text>
        <dbReference type="Rhea" id="RHEA:57752"/>
        <dbReference type="Rhea" id="RHEA-COMP:14987"/>
        <dbReference type="Rhea" id="RHEA-COMP:14988"/>
        <dbReference type="ChEBI" id="CHEBI:15377"/>
        <dbReference type="ChEBI" id="CHEBI:15378"/>
        <dbReference type="ChEBI" id="CHEBI:16526"/>
        <dbReference type="ChEBI" id="CHEBI:57287"/>
        <dbReference type="ChEBI" id="CHEBI:57327"/>
        <dbReference type="ChEBI" id="CHEBI:57384"/>
        <dbReference type="ChEBI" id="CHEBI:57783"/>
        <dbReference type="ChEBI" id="CHEBI:58349"/>
        <dbReference type="ChEBI" id="CHEBI:142237"/>
        <dbReference type="ChEBI" id="CHEBI:142238"/>
        <dbReference type="EC" id="2.3.1.292"/>
    </reaction>
</comment>
<comment type="catalytic activity">
    <reaction evidence="2">
        <text>17-(4-hydroxyphenyl)heptadecanoyl-[(phenol)carboxyphthiodiolenone synthase] + 2 (S)-methylmalonyl-CoA + 3 malonyl-CoA + 5 NADPH + 10 H(+) = C35-(phenol)carboxyphthiodiolenone-[(phenol)carboxyphthiodiolenone synthase] + 5 CO2 + 5 NADP(+) + 5 CoA + 2 H2O</text>
        <dbReference type="Rhea" id="RHEA:57756"/>
        <dbReference type="Rhea" id="RHEA-COMP:14272"/>
        <dbReference type="Rhea" id="RHEA-COMP:14989"/>
        <dbReference type="ChEBI" id="CHEBI:15377"/>
        <dbReference type="ChEBI" id="CHEBI:15378"/>
        <dbReference type="ChEBI" id="CHEBI:16526"/>
        <dbReference type="ChEBI" id="CHEBI:57287"/>
        <dbReference type="ChEBI" id="CHEBI:57327"/>
        <dbReference type="ChEBI" id="CHEBI:57384"/>
        <dbReference type="ChEBI" id="CHEBI:57783"/>
        <dbReference type="ChEBI" id="CHEBI:58349"/>
        <dbReference type="ChEBI" id="CHEBI:133300"/>
        <dbReference type="ChEBI" id="CHEBI:142259"/>
        <dbReference type="EC" id="2.3.1.292"/>
    </reaction>
</comment>
<comment type="catalytic activity">
    <reaction evidence="2">
        <text>19-(4-hydroxyphenyl)nonadecanoyl-[(phenol)carboxyphthiodiolenone synthase] + 2 (S)-methylmalonyl-CoA + 3 malonyl-CoA + 5 NADPH + 10 H(+) = C37-(phenol)carboxyphthiodiolenone-[(phenol)carboxyphthiodiolenone synthase] + 5 CO2 + 5 NADP(+) + 5 CoA + 2 H2O</text>
        <dbReference type="Rhea" id="RHEA:57760"/>
        <dbReference type="Rhea" id="RHEA-COMP:14273"/>
        <dbReference type="Rhea" id="RHEA-COMP:14990"/>
        <dbReference type="ChEBI" id="CHEBI:15377"/>
        <dbReference type="ChEBI" id="CHEBI:15378"/>
        <dbReference type="ChEBI" id="CHEBI:16526"/>
        <dbReference type="ChEBI" id="CHEBI:57287"/>
        <dbReference type="ChEBI" id="CHEBI:57327"/>
        <dbReference type="ChEBI" id="CHEBI:57384"/>
        <dbReference type="ChEBI" id="CHEBI:57783"/>
        <dbReference type="ChEBI" id="CHEBI:58349"/>
        <dbReference type="ChEBI" id="CHEBI:133301"/>
        <dbReference type="ChEBI" id="CHEBI:142260"/>
        <dbReference type="EC" id="2.3.1.292"/>
    </reaction>
</comment>
<comment type="cofactor">
    <cofactor evidence="2">
        <name>NADP(+)</name>
        <dbReference type="ChEBI" id="CHEBI:58349"/>
    </cofactor>
</comment>
<comment type="cofactor">
    <cofactor evidence="1">
        <name>pantetheine 4'-phosphate</name>
        <dbReference type="ChEBI" id="CHEBI:47942"/>
    </cofactor>
    <text evidence="1">Binds 1 phosphopantetheine covalently.</text>
</comment>
<comment type="pathway">
    <text evidence="2">Lipid metabolism; fatty acid biosynthesis.</text>
</comment>
<reference key="1">
    <citation type="journal article" date="2002" name="J. Bacteriol.">
        <title>Whole-genome comparison of Mycobacterium tuberculosis clinical and laboratory strains.</title>
        <authorList>
            <person name="Fleischmann R.D."/>
            <person name="Alland D."/>
            <person name="Eisen J.A."/>
            <person name="Carpenter L."/>
            <person name="White O."/>
            <person name="Peterson J.D."/>
            <person name="DeBoy R.T."/>
            <person name="Dodson R.J."/>
            <person name="Gwinn M.L."/>
            <person name="Haft D.H."/>
            <person name="Hickey E.K."/>
            <person name="Kolonay J.F."/>
            <person name="Nelson W.C."/>
            <person name="Umayam L.A."/>
            <person name="Ermolaeva M.D."/>
            <person name="Salzberg S.L."/>
            <person name="Delcher A."/>
            <person name="Utterback T.R."/>
            <person name="Weidman J.F."/>
            <person name="Khouri H.M."/>
            <person name="Gill J."/>
            <person name="Mikula A."/>
            <person name="Bishai W."/>
            <person name="Jacobs W.R. Jr."/>
            <person name="Venter J.C."/>
            <person name="Fraser C.M."/>
        </authorList>
    </citation>
    <scope>NUCLEOTIDE SEQUENCE [LARGE SCALE GENOMIC DNA]</scope>
    <source>
        <strain>CDC 1551 / Oshkosh</strain>
    </source>
</reference>
<name>PPSB_MYCTO</name>
<proteinExistence type="inferred from homology"/>
<organism>
    <name type="scientific">Mycobacterium tuberculosis (strain CDC 1551 / Oshkosh)</name>
    <dbReference type="NCBI Taxonomy" id="83331"/>
    <lineage>
        <taxon>Bacteria</taxon>
        <taxon>Bacillati</taxon>
        <taxon>Actinomycetota</taxon>
        <taxon>Actinomycetes</taxon>
        <taxon>Mycobacteriales</taxon>
        <taxon>Mycobacteriaceae</taxon>
        <taxon>Mycobacterium</taxon>
        <taxon>Mycobacterium tuberculosis complex</taxon>
    </lineage>
</organism>